<keyword id="KW-1185">Reference proteome</keyword>
<reference key="1">
    <citation type="journal article" date="1994" name="Mol. Microbiol.">
        <title>Identification of an HP1 phage protein required for site-specific excision.</title>
        <authorList>
            <person name="Esposito D."/>
            <person name="Scocca J.J."/>
        </authorList>
    </citation>
    <scope>NUCLEOTIDE SEQUENCE [GENOMIC DNA]</scope>
</reference>
<reference key="2">
    <citation type="journal article" date="1996" name="Nucleic Acids Res.">
        <title>The complete nucleotide sequence of bacteriophage HP1 DNA.</title>
        <authorList>
            <person name="Esposito D."/>
            <person name="Fitzmaurice W.P."/>
            <person name="Benjamin R.C."/>
            <person name="Goodman S.D."/>
            <person name="Waldman A.S."/>
            <person name="Scocca J.J."/>
        </authorList>
    </citation>
    <scope>NUCLEOTIDE SEQUENCE [LARGE SCALE GENOMIC DNA]</scope>
</reference>
<proteinExistence type="predicted"/>
<name>YO09_BPHC1</name>
<dbReference type="EMBL" id="U24159">
    <property type="protein sequence ID" value="AAB09193.1"/>
    <property type="molecule type" value="Genomic_DNA"/>
</dbReference>
<dbReference type="PIR" id="S72340">
    <property type="entry name" value="S72340"/>
</dbReference>
<dbReference type="RefSeq" id="NP_043477.1">
    <property type="nucleotide sequence ID" value="NC_001697.1"/>
</dbReference>
<dbReference type="GeneID" id="1261130"/>
<dbReference type="KEGG" id="vg:1261130"/>
<dbReference type="Proteomes" id="UP000001713">
    <property type="component" value="Segment"/>
</dbReference>
<sequence length="86" mass="9742">MTKFNLEQALQGAPVRLNNGFKAYIFADVSLLAINEPYPLIGGYAYSISSFYDNQEHQRFEECRWAKDGKCDRLSALGSIAGMWED</sequence>
<organism>
    <name type="scientific">Haemophilus phage HP1 (strain HP1c1)</name>
    <name type="common">Bacteriophage HP1</name>
    <dbReference type="NCBI Taxonomy" id="1289570"/>
    <lineage>
        <taxon>Viruses</taxon>
        <taxon>Duplodnaviria</taxon>
        <taxon>Heunggongvirae</taxon>
        <taxon>Uroviricota</taxon>
        <taxon>Caudoviricetes</taxon>
        <taxon>Peduoviridae</taxon>
        <taxon>Hpunavirus</taxon>
        <taxon>Haemophilus phage HP1</taxon>
    </lineage>
</organism>
<accession>P69624</accession>
<accession>P51710</accession>
<feature type="chain" id="PRO_0000165325" description="Uncharacterized 9.7 kDa protein in cox-rep intergenic region">
    <location>
        <begin position="1"/>
        <end position="86"/>
    </location>
</feature>
<organismHost>
    <name type="scientific">Haemophilus influenzae</name>
    <dbReference type="NCBI Taxonomy" id="727"/>
</organismHost>
<protein>
    <recommendedName>
        <fullName>Uncharacterized 9.7 kDa protein in cox-rep intergenic region</fullName>
    </recommendedName>
    <alternativeName>
        <fullName>ORF25</fullName>
    </alternativeName>
    <alternativeName>
        <fullName>ORF9</fullName>
    </alternativeName>
</protein>